<proteinExistence type="predicted"/>
<dbReference type="EMBL" id="M65289">
    <property type="protein sequence ID" value="AAA22480.1"/>
    <property type="molecule type" value="Genomic_DNA"/>
</dbReference>
<dbReference type="PIR" id="PQ0299">
    <property type="entry name" value="PQ0299"/>
</dbReference>
<dbReference type="SMR" id="P32815"/>
<dbReference type="GO" id="GO:0051539">
    <property type="term" value="F:4 iron, 4 sulfur cluster binding"/>
    <property type="evidence" value="ECO:0007669"/>
    <property type="project" value="UniProtKB-KW"/>
</dbReference>
<dbReference type="GO" id="GO:0052693">
    <property type="term" value="F:epoxyqueuosine reductase activity"/>
    <property type="evidence" value="ECO:0007669"/>
    <property type="project" value="TreeGrafter"/>
</dbReference>
<dbReference type="GO" id="GO:0046872">
    <property type="term" value="F:metal ion binding"/>
    <property type="evidence" value="ECO:0007669"/>
    <property type="project" value="UniProtKB-KW"/>
</dbReference>
<dbReference type="GO" id="GO:0008616">
    <property type="term" value="P:queuosine biosynthetic process"/>
    <property type="evidence" value="ECO:0007669"/>
    <property type="project" value="InterPro"/>
</dbReference>
<dbReference type="GO" id="GO:0008033">
    <property type="term" value="P:tRNA processing"/>
    <property type="evidence" value="ECO:0007669"/>
    <property type="project" value="InterPro"/>
</dbReference>
<dbReference type="FunFam" id="3.30.70.20:FF:000037">
    <property type="entry name" value="Epoxyqueuosine reductase"/>
    <property type="match status" value="1"/>
</dbReference>
<dbReference type="Gene3D" id="3.30.70.20">
    <property type="match status" value="1"/>
</dbReference>
<dbReference type="Gene3D" id="1.25.10.10">
    <property type="entry name" value="Leucine-rich Repeat Variant"/>
    <property type="match status" value="1"/>
</dbReference>
<dbReference type="InterPro" id="IPR017896">
    <property type="entry name" value="4Fe4S_Fe-S-bd"/>
</dbReference>
<dbReference type="InterPro" id="IPR017900">
    <property type="entry name" value="4Fe4S_Fe_S_CS"/>
</dbReference>
<dbReference type="InterPro" id="IPR011989">
    <property type="entry name" value="ARM-like"/>
</dbReference>
<dbReference type="InterPro" id="IPR016024">
    <property type="entry name" value="ARM-type_fold"/>
</dbReference>
<dbReference type="InterPro" id="IPR004155">
    <property type="entry name" value="PBS_lyase_HEAT"/>
</dbReference>
<dbReference type="InterPro" id="IPR004453">
    <property type="entry name" value="QueG"/>
</dbReference>
<dbReference type="NCBIfam" id="TIGR00276">
    <property type="entry name" value="tRNA epoxyqueuosine(34) reductase QueG"/>
    <property type="match status" value="1"/>
</dbReference>
<dbReference type="PANTHER" id="PTHR30002">
    <property type="entry name" value="EPOXYQUEUOSINE REDUCTASE"/>
    <property type="match status" value="1"/>
</dbReference>
<dbReference type="PANTHER" id="PTHR30002:SF4">
    <property type="entry name" value="EPOXYQUEUOSINE REDUCTASE"/>
    <property type="match status" value="1"/>
</dbReference>
<dbReference type="Pfam" id="PF13484">
    <property type="entry name" value="Fer4_16"/>
    <property type="match status" value="1"/>
</dbReference>
<dbReference type="Pfam" id="PF13646">
    <property type="entry name" value="HEAT_2"/>
    <property type="match status" value="1"/>
</dbReference>
<dbReference type="SMART" id="SM00567">
    <property type="entry name" value="EZ_HEAT"/>
    <property type="match status" value="2"/>
</dbReference>
<dbReference type="SUPFAM" id="SSF54862">
    <property type="entry name" value="4Fe-4S ferredoxins"/>
    <property type="match status" value="1"/>
</dbReference>
<dbReference type="SUPFAM" id="SSF48371">
    <property type="entry name" value="ARM repeat"/>
    <property type="match status" value="1"/>
</dbReference>
<dbReference type="PROSITE" id="PS00198">
    <property type="entry name" value="4FE4S_FER_1"/>
    <property type="match status" value="1"/>
</dbReference>
<dbReference type="PROSITE" id="PS51379">
    <property type="entry name" value="4FE4S_FER_2"/>
    <property type="match status" value="1"/>
</dbReference>
<accession>P32815</accession>
<name>YGL5_GEOSE</name>
<keyword id="KW-0004">4Fe-4S</keyword>
<keyword id="KW-0408">Iron</keyword>
<keyword id="KW-0411">Iron-sulfur</keyword>
<keyword id="KW-0479">Metal-binding</keyword>
<reference key="1">
    <citation type="journal article" date="1992" name="Gene">
        <title>Cloning and characterization of a gene from Bacillus stearothermophilus var. non-diastaticus encoding a glycerol dehydrogenase.</title>
        <authorList>
            <person name="Mallinder P.R."/>
            <person name="Pritchard A."/>
            <person name="Moir A."/>
        </authorList>
    </citation>
    <scope>NUCLEOTIDE SEQUENCE [GENOMIC DNA]</scope>
    <source>
        <strain>DSM 2334 / Var. Non-diastaticus</strain>
    </source>
</reference>
<feature type="chain" id="PRO_0000159294" description="Uncharacterized protein in gldA 3'region">
    <location>
        <begin position="1" status="less than"/>
        <end position="216"/>
    </location>
</feature>
<feature type="domain" description="4Fe-4S ferredoxin-type" evidence="2">
    <location>
        <begin position="18"/>
        <end position="47"/>
    </location>
</feature>
<feature type="binding site" evidence="1">
    <location>
        <position position="27"/>
    </location>
    <ligand>
        <name>[4Fe-4S] cluster</name>
        <dbReference type="ChEBI" id="CHEBI:49883"/>
        <label>1</label>
    </ligand>
</feature>
<feature type="binding site" evidence="1">
    <location>
        <position position="30"/>
    </location>
    <ligand>
        <name>[4Fe-4S] cluster</name>
        <dbReference type="ChEBI" id="CHEBI:49883"/>
        <label>1</label>
    </ligand>
</feature>
<feature type="binding site" evidence="1">
    <location>
        <position position="33"/>
    </location>
    <ligand>
        <name>[4Fe-4S] cluster</name>
        <dbReference type="ChEBI" id="CHEBI:49883"/>
        <label>1</label>
    </ligand>
</feature>
<feature type="binding site" evidence="1">
    <location>
        <position position="37"/>
    </location>
    <ligand>
        <name>[4Fe-4S] cluster</name>
        <dbReference type="ChEBI" id="CHEBI:49883"/>
        <label>2</label>
    </ligand>
</feature>
<feature type="binding site" evidence="1">
    <location>
        <position position="79"/>
    </location>
    <ligand>
        <name>[4Fe-4S] cluster</name>
        <dbReference type="ChEBI" id="CHEBI:49883"/>
        <label>2</label>
    </ligand>
</feature>
<feature type="binding site" evidence="1">
    <location>
        <position position="82"/>
    </location>
    <ligand>
        <name>[4Fe-4S] cluster</name>
        <dbReference type="ChEBI" id="CHEBI:49883"/>
        <label>2</label>
    </ligand>
</feature>
<feature type="binding site" evidence="1">
    <location>
        <position position="86"/>
    </location>
    <ligand>
        <name>[4Fe-4S] cluster</name>
        <dbReference type="ChEBI" id="CHEBI:49883"/>
        <label>1</label>
    </ligand>
</feature>
<feature type="non-terminal residue">
    <location>
        <position position="1"/>
    </location>
</feature>
<evidence type="ECO:0000255" key="1"/>
<evidence type="ECO:0000255" key="2">
    <source>
        <dbReference type="PROSITE-ProRule" id="PRU00711"/>
    </source>
</evidence>
<sequence>EFGSYVYLGEMITNIPFPPDSPIEDRCGSCNICVDSCPTGALVQGGQLDSKKCIAFLTQTKGFLPDEYRGKIGNRLYGCDTCQLVCPENKGKDFHIHSEMEPDPEIAKPKLKPLLHISNREFKEKFGHIAGSWRGKKPIQRNAIIALAHYKDRTALPDLIKLMHEDSRPIIRGTAAWAIGRIGDQSVLFELEKALEKEQDEEVKNEIVKGIEMLKA</sequence>
<organism>
    <name type="scientific">Geobacillus stearothermophilus</name>
    <name type="common">Bacillus stearothermophilus</name>
    <dbReference type="NCBI Taxonomy" id="1422"/>
    <lineage>
        <taxon>Bacteria</taxon>
        <taxon>Bacillati</taxon>
        <taxon>Bacillota</taxon>
        <taxon>Bacilli</taxon>
        <taxon>Bacillales</taxon>
        <taxon>Anoxybacillaceae</taxon>
        <taxon>Geobacillus</taxon>
    </lineage>
</organism>
<protein>
    <recommendedName>
        <fullName>Uncharacterized protein in gldA 3'region</fullName>
    </recommendedName>
    <alternativeName>
        <fullName>ORF5</fullName>
    </alternativeName>
</protein>